<proteinExistence type="inferred from homology"/>
<protein>
    <recommendedName>
        <fullName>Plasma membrane fusion protein PRM1</fullName>
    </recommendedName>
</protein>
<evidence type="ECO:0000250" key="1"/>
<evidence type="ECO:0000255" key="2"/>
<evidence type="ECO:0000305" key="3"/>
<dbReference type="EMBL" id="CR380956">
    <property type="protein sequence ID" value="CAG61024.1"/>
    <property type="molecule type" value="Genomic_DNA"/>
</dbReference>
<dbReference type="RefSeq" id="XP_448073.1">
    <property type="nucleotide sequence ID" value="XM_448073.1"/>
</dbReference>
<dbReference type="FunCoup" id="Q6FNX1">
    <property type="interactions" value="56"/>
</dbReference>
<dbReference type="STRING" id="284593.Q6FNX1"/>
<dbReference type="GlyCosmos" id="Q6FNX1">
    <property type="glycosylation" value="9 sites, No reported glycans"/>
</dbReference>
<dbReference type="EnsemblFungi" id="CAGL0J08371g-T">
    <property type="protein sequence ID" value="CAGL0J08371g-T-p1"/>
    <property type="gene ID" value="CAGL0J08371g"/>
</dbReference>
<dbReference type="KEGG" id="cgr:2889705"/>
<dbReference type="CGD" id="CAL0133330">
    <property type="gene designation" value="CAGL0J08371g"/>
</dbReference>
<dbReference type="VEuPathDB" id="FungiDB:CAGL0J08371g"/>
<dbReference type="eggNOG" id="ENOG502QRP5">
    <property type="taxonomic scope" value="Eukaryota"/>
</dbReference>
<dbReference type="HOGENOM" id="CLU_010191_1_0_1"/>
<dbReference type="InParanoid" id="Q6FNX1"/>
<dbReference type="OMA" id="MYKSTYR"/>
<dbReference type="Proteomes" id="UP000002428">
    <property type="component" value="Chromosome J"/>
</dbReference>
<dbReference type="GO" id="GO:0043332">
    <property type="term" value="C:mating projection tip"/>
    <property type="evidence" value="ECO:0007669"/>
    <property type="project" value="EnsemblFungi"/>
</dbReference>
<dbReference type="GO" id="GO:0005886">
    <property type="term" value="C:plasma membrane"/>
    <property type="evidence" value="ECO:0007669"/>
    <property type="project" value="UniProtKB-SubCell"/>
</dbReference>
<dbReference type="GO" id="GO:0032220">
    <property type="term" value="P:plasma membrane fusion involved in cytogamy"/>
    <property type="evidence" value="ECO:0007669"/>
    <property type="project" value="EnsemblFungi"/>
</dbReference>
<dbReference type="InterPro" id="IPR026777">
    <property type="entry name" value="PRM1"/>
</dbReference>
<dbReference type="PANTHER" id="PTHR31030">
    <property type="entry name" value="PLASMA MEMBRANE FUSION PROTEIN PRM1"/>
    <property type="match status" value="1"/>
</dbReference>
<dbReference type="PANTHER" id="PTHR31030:SF1">
    <property type="entry name" value="PLASMA MEMBRANE FUSION PROTEIN PRM1"/>
    <property type="match status" value="1"/>
</dbReference>
<reference key="1">
    <citation type="journal article" date="2004" name="Nature">
        <title>Genome evolution in yeasts.</title>
        <authorList>
            <person name="Dujon B."/>
            <person name="Sherman D."/>
            <person name="Fischer G."/>
            <person name="Durrens P."/>
            <person name="Casaregola S."/>
            <person name="Lafontaine I."/>
            <person name="de Montigny J."/>
            <person name="Marck C."/>
            <person name="Neuveglise C."/>
            <person name="Talla E."/>
            <person name="Goffard N."/>
            <person name="Frangeul L."/>
            <person name="Aigle M."/>
            <person name="Anthouard V."/>
            <person name="Babour A."/>
            <person name="Barbe V."/>
            <person name="Barnay S."/>
            <person name="Blanchin S."/>
            <person name="Beckerich J.-M."/>
            <person name="Beyne E."/>
            <person name="Bleykasten C."/>
            <person name="Boisrame A."/>
            <person name="Boyer J."/>
            <person name="Cattolico L."/>
            <person name="Confanioleri F."/>
            <person name="de Daruvar A."/>
            <person name="Despons L."/>
            <person name="Fabre E."/>
            <person name="Fairhead C."/>
            <person name="Ferry-Dumazet H."/>
            <person name="Groppi A."/>
            <person name="Hantraye F."/>
            <person name="Hennequin C."/>
            <person name="Jauniaux N."/>
            <person name="Joyet P."/>
            <person name="Kachouri R."/>
            <person name="Kerrest A."/>
            <person name="Koszul R."/>
            <person name="Lemaire M."/>
            <person name="Lesur I."/>
            <person name="Ma L."/>
            <person name="Muller H."/>
            <person name="Nicaud J.-M."/>
            <person name="Nikolski M."/>
            <person name="Oztas S."/>
            <person name="Ozier-Kalogeropoulos O."/>
            <person name="Pellenz S."/>
            <person name="Potier S."/>
            <person name="Richard G.-F."/>
            <person name="Straub M.-L."/>
            <person name="Suleau A."/>
            <person name="Swennen D."/>
            <person name="Tekaia F."/>
            <person name="Wesolowski-Louvel M."/>
            <person name="Westhof E."/>
            <person name="Wirth B."/>
            <person name="Zeniou-Meyer M."/>
            <person name="Zivanovic Y."/>
            <person name="Bolotin-Fukuhara M."/>
            <person name="Thierry A."/>
            <person name="Bouchier C."/>
            <person name="Caudron B."/>
            <person name="Scarpelli C."/>
            <person name="Gaillardin C."/>
            <person name="Weissenbach J."/>
            <person name="Wincker P."/>
            <person name="Souciet J.-L."/>
        </authorList>
    </citation>
    <scope>NUCLEOTIDE SEQUENCE [LARGE SCALE GENOMIC DNA]</scope>
    <source>
        <strain>ATCC 2001 / BCRC 20586 / JCM 3761 / NBRC 0622 / NRRL Y-65 / CBS 138</strain>
    </source>
</reference>
<sequence length="622" mass="70202">MRNYLLLRDRLTQVWLNKYSITVTILTAKIVLFNYFIIRILRYTEKYAISSCNGLDQVNRKVYDDLPIFVNTLGNYMIRKSMLESVEASLRGLEILIDASEGLLGFLVDLYLGTYACLLISAVDGAVDVATNTTEHILEAVNNTLIEATRGLDDGLNDLTSLINKGGNRLSSIFKSDNSVAASLSKVNFTVKGLRNIHLSSKINDQLQYMADKVPSFDDLKSETKDLISIPFYHVKREITKVNAESLLPDTKILYLRNNTDTTLYPICGQYIPNIKKVYEHLIHILKVGNILVAILGIFIALFMAIPSIQKEYQESKRLNNVQDEVSQYIDNKEFMSSGDNSSLNYSPFNDSKFNLAESYQRNFNPIARWMTIKMGKYFGNDETEYSERLQFCMLYIFSSRSSTIMAMGLIGLITVAIQLIVIQIISNYLSNTGKVHIQLQASNDEINKMIKSDINLWTSLANQYVNGTEANLNTQVFGWITNTTASVNATVAHAVDKIEYILASSFNNTPLYKPMKTVVGCAILRKLISVENAMTWINNEAHIKLPRINTTELINIAGHTKMLPSSNESHMFDQVEKIVNIARKTALNELYVPLALIGIWLTQIPMALLLSWRRCDTTGKT</sequence>
<organism>
    <name type="scientific">Candida glabrata (strain ATCC 2001 / BCRC 20586 / JCM 3761 / NBRC 0622 / NRRL Y-65 / CBS 138)</name>
    <name type="common">Yeast</name>
    <name type="synonym">Nakaseomyces glabratus</name>
    <dbReference type="NCBI Taxonomy" id="284593"/>
    <lineage>
        <taxon>Eukaryota</taxon>
        <taxon>Fungi</taxon>
        <taxon>Dikarya</taxon>
        <taxon>Ascomycota</taxon>
        <taxon>Saccharomycotina</taxon>
        <taxon>Saccharomycetes</taxon>
        <taxon>Saccharomycetales</taxon>
        <taxon>Saccharomycetaceae</taxon>
        <taxon>Nakaseomyces</taxon>
    </lineage>
</organism>
<accession>Q6FNX1</accession>
<feature type="chain" id="PRO_0000337275" description="Plasma membrane fusion protein PRM1">
    <location>
        <begin position="1"/>
        <end position="622"/>
    </location>
</feature>
<feature type="topological domain" description="Extracellular" evidence="1">
    <location>
        <begin position="1"/>
        <end position="20"/>
    </location>
</feature>
<feature type="transmembrane region" description="Helical" evidence="2">
    <location>
        <begin position="21"/>
        <end position="41"/>
    </location>
</feature>
<feature type="topological domain" description="Cytoplasmic" evidence="1">
    <location>
        <begin position="42"/>
        <end position="102"/>
    </location>
</feature>
<feature type="transmembrane region" description="Helical" evidence="2">
    <location>
        <begin position="103"/>
        <end position="123"/>
    </location>
</feature>
<feature type="topological domain" description="Extracellular" evidence="1">
    <location>
        <begin position="124"/>
        <end position="288"/>
    </location>
</feature>
<feature type="transmembrane region" description="Helical" evidence="2">
    <location>
        <begin position="289"/>
        <end position="309"/>
    </location>
</feature>
<feature type="topological domain" description="Cytoplasmic" evidence="1">
    <location>
        <begin position="310"/>
        <end position="404"/>
    </location>
</feature>
<feature type="transmembrane region" description="Helical" evidence="2">
    <location>
        <begin position="405"/>
        <end position="425"/>
    </location>
</feature>
<feature type="topological domain" description="Extracellular" evidence="1">
    <location>
        <begin position="426"/>
        <end position="590"/>
    </location>
</feature>
<feature type="transmembrane region" description="Helical" evidence="2">
    <location>
        <begin position="591"/>
        <end position="611"/>
    </location>
</feature>
<feature type="topological domain" description="Cytoplasmic" evidence="1">
    <location>
        <begin position="612"/>
        <end position="622"/>
    </location>
</feature>
<feature type="glycosylation site" description="N-linked (GlcNAc...) asparagine" evidence="2">
    <location>
        <position position="132"/>
    </location>
</feature>
<feature type="glycosylation site" description="N-linked (GlcNAc...) asparagine" evidence="2">
    <location>
        <position position="142"/>
    </location>
</feature>
<feature type="glycosylation site" description="N-linked (GlcNAc...) asparagine" evidence="2">
    <location>
        <position position="188"/>
    </location>
</feature>
<feature type="glycosylation site" description="N-linked (GlcNAc...) asparagine" evidence="2">
    <location>
        <position position="258"/>
    </location>
</feature>
<feature type="glycosylation site" description="N-linked (GlcNAc...) asparagine" evidence="2">
    <location>
        <position position="467"/>
    </location>
</feature>
<feature type="glycosylation site" description="N-linked (GlcNAc...) asparagine" evidence="2">
    <location>
        <position position="483"/>
    </location>
</feature>
<feature type="glycosylation site" description="N-linked (GlcNAc...) asparagine" evidence="2">
    <location>
        <position position="489"/>
    </location>
</feature>
<feature type="glycosylation site" description="N-linked (GlcNAc...) asparagine" evidence="2">
    <location>
        <position position="550"/>
    </location>
</feature>
<feature type="glycosylation site" description="N-linked (GlcNAc...) asparagine" evidence="2">
    <location>
        <position position="568"/>
    </location>
</feature>
<name>PRM1_CANGA</name>
<comment type="function">
    <text evidence="1">Involved in cell fusion during mating by stabilizing the plasma membrane fusion event.</text>
</comment>
<comment type="subcellular location">
    <subcellularLocation>
        <location evidence="1">Cell membrane</location>
        <topology evidence="1">Multi-pass membrane protein</topology>
    </subcellularLocation>
</comment>
<comment type="similarity">
    <text evidence="3">Belongs to the PRM1 family.</text>
</comment>
<keyword id="KW-1003">Cell membrane</keyword>
<keyword id="KW-0184">Conjugation</keyword>
<keyword id="KW-0325">Glycoprotein</keyword>
<keyword id="KW-0472">Membrane</keyword>
<keyword id="KW-1185">Reference proteome</keyword>
<keyword id="KW-0812">Transmembrane</keyword>
<keyword id="KW-1133">Transmembrane helix</keyword>
<gene>
    <name type="primary">PRM1</name>
    <name type="ordered locus">CAGL0J08371g</name>
</gene>